<keyword id="KW-0963">Cytoplasm</keyword>
<keyword id="KW-0539">Nucleus</keyword>
<keyword id="KW-1185">Reference proteome</keyword>
<keyword id="KW-0804">Transcription</keyword>
<proteinExistence type="inferred from homology"/>
<reference key="1">
    <citation type="journal article" date="2002" name="Nature">
        <title>The genome sequence of Schizosaccharomyces pombe.</title>
        <authorList>
            <person name="Wood V."/>
            <person name="Gwilliam R."/>
            <person name="Rajandream M.A."/>
            <person name="Lyne M.H."/>
            <person name="Lyne R."/>
            <person name="Stewart A."/>
            <person name="Sgouros J.G."/>
            <person name="Peat N."/>
            <person name="Hayles J."/>
            <person name="Baker S.G."/>
            <person name="Basham D."/>
            <person name="Bowman S."/>
            <person name="Brooks K."/>
            <person name="Brown D."/>
            <person name="Brown S."/>
            <person name="Chillingworth T."/>
            <person name="Churcher C.M."/>
            <person name="Collins M."/>
            <person name="Connor R."/>
            <person name="Cronin A."/>
            <person name="Davis P."/>
            <person name="Feltwell T."/>
            <person name="Fraser A."/>
            <person name="Gentles S."/>
            <person name="Goble A."/>
            <person name="Hamlin N."/>
            <person name="Harris D.E."/>
            <person name="Hidalgo J."/>
            <person name="Hodgson G."/>
            <person name="Holroyd S."/>
            <person name="Hornsby T."/>
            <person name="Howarth S."/>
            <person name="Huckle E.J."/>
            <person name="Hunt S."/>
            <person name="Jagels K."/>
            <person name="James K.D."/>
            <person name="Jones L."/>
            <person name="Jones M."/>
            <person name="Leather S."/>
            <person name="McDonald S."/>
            <person name="McLean J."/>
            <person name="Mooney P."/>
            <person name="Moule S."/>
            <person name="Mungall K.L."/>
            <person name="Murphy L.D."/>
            <person name="Niblett D."/>
            <person name="Odell C."/>
            <person name="Oliver K."/>
            <person name="O'Neil S."/>
            <person name="Pearson D."/>
            <person name="Quail M.A."/>
            <person name="Rabbinowitsch E."/>
            <person name="Rutherford K.M."/>
            <person name="Rutter S."/>
            <person name="Saunders D."/>
            <person name="Seeger K."/>
            <person name="Sharp S."/>
            <person name="Skelton J."/>
            <person name="Simmonds M.N."/>
            <person name="Squares R."/>
            <person name="Squares S."/>
            <person name="Stevens K."/>
            <person name="Taylor K."/>
            <person name="Taylor R.G."/>
            <person name="Tivey A."/>
            <person name="Walsh S.V."/>
            <person name="Warren T."/>
            <person name="Whitehead S."/>
            <person name="Woodward J.R."/>
            <person name="Volckaert G."/>
            <person name="Aert R."/>
            <person name="Robben J."/>
            <person name="Grymonprez B."/>
            <person name="Weltjens I."/>
            <person name="Vanstreels E."/>
            <person name="Rieger M."/>
            <person name="Schaefer M."/>
            <person name="Mueller-Auer S."/>
            <person name="Gabel C."/>
            <person name="Fuchs M."/>
            <person name="Duesterhoeft A."/>
            <person name="Fritzc C."/>
            <person name="Holzer E."/>
            <person name="Moestl D."/>
            <person name="Hilbert H."/>
            <person name="Borzym K."/>
            <person name="Langer I."/>
            <person name="Beck A."/>
            <person name="Lehrach H."/>
            <person name="Reinhardt R."/>
            <person name="Pohl T.M."/>
            <person name="Eger P."/>
            <person name="Zimmermann W."/>
            <person name="Wedler H."/>
            <person name="Wambutt R."/>
            <person name="Purnelle B."/>
            <person name="Goffeau A."/>
            <person name="Cadieu E."/>
            <person name="Dreano S."/>
            <person name="Gloux S."/>
            <person name="Lelaure V."/>
            <person name="Mottier S."/>
            <person name="Galibert F."/>
            <person name="Aves S.J."/>
            <person name="Xiang Z."/>
            <person name="Hunt C."/>
            <person name="Moore K."/>
            <person name="Hurst S.M."/>
            <person name="Lucas M."/>
            <person name="Rochet M."/>
            <person name="Gaillardin C."/>
            <person name="Tallada V.A."/>
            <person name="Garzon A."/>
            <person name="Thode G."/>
            <person name="Daga R.R."/>
            <person name="Cruzado L."/>
            <person name="Jimenez J."/>
            <person name="Sanchez M."/>
            <person name="del Rey F."/>
            <person name="Benito J."/>
            <person name="Dominguez A."/>
            <person name="Revuelta J.L."/>
            <person name="Moreno S."/>
            <person name="Armstrong J."/>
            <person name="Forsburg S.L."/>
            <person name="Cerutti L."/>
            <person name="Lowe T."/>
            <person name="McCombie W.R."/>
            <person name="Paulsen I."/>
            <person name="Potashkin J."/>
            <person name="Shpakovski G.V."/>
            <person name="Ussery D."/>
            <person name="Barrell B.G."/>
            <person name="Nurse P."/>
        </authorList>
    </citation>
    <scope>NUCLEOTIDE SEQUENCE [LARGE SCALE GENOMIC DNA]</scope>
    <source>
        <strain>972 / ATCC 24843</strain>
    </source>
</reference>
<reference key="2">
    <citation type="journal article" date="2006" name="Nat. Biotechnol.">
        <title>ORFeome cloning and global analysis of protein localization in the fission yeast Schizosaccharomyces pombe.</title>
        <authorList>
            <person name="Matsuyama A."/>
            <person name="Arai R."/>
            <person name="Yashiroda Y."/>
            <person name="Shirai A."/>
            <person name="Kamata A."/>
            <person name="Sekido S."/>
            <person name="Kobayashi Y."/>
            <person name="Hashimoto A."/>
            <person name="Hamamoto M."/>
            <person name="Hiraoka Y."/>
            <person name="Horinouchi S."/>
            <person name="Yoshida M."/>
        </authorList>
    </citation>
    <scope>SUBCELLULAR LOCATION [LARGE SCALE ANALYSIS]</scope>
</reference>
<name>THP3_SCHPO</name>
<evidence type="ECO:0000250" key="1"/>
<evidence type="ECO:0000255" key="2">
    <source>
        <dbReference type="PROSITE-ProRule" id="PRU01185"/>
    </source>
</evidence>
<evidence type="ECO:0000256" key="3">
    <source>
        <dbReference type="SAM" id="MobiDB-lite"/>
    </source>
</evidence>
<evidence type="ECO:0000269" key="4">
    <source>
    </source>
</evidence>
<evidence type="ECO:0000305" key="5"/>
<dbReference type="EMBL" id="CU329671">
    <property type="protein sequence ID" value="CAB39853.1"/>
    <property type="molecule type" value="Genomic_DNA"/>
</dbReference>
<dbReference type="RefSeq" id="NP_596221.1">
    <property type="nucleotide sequence ID" value="NM_001022140.2"/>
</dbReference>
<dbReference type="SMR" id="Q1MTP1"/>
<dbReference type="BioGRID" id="276980">
    <property type="interactions" value="25"/>
</dbReference>
<dbReference type="FunCoup" id="Q1MTP1">
    <property type="interactions" value="325"/>
</dbReference>
<dbReference type="STRING" id="284812.Q1MTP1"/>
<dbReference type="iPTMnet" id="Q1MTP1"/>
<dbReference type="PaxDb" id="4896-SPBC2A9.11c.1"/>
<dbReference type="EnsemblFungi" id="SPBC2A9.11c.1">
    <property type="protein sequence ID" value="SPBC2A9.11c.1:pep"/>
    <property type="gene ID" value="SPBC2A9.11c"/>
</dbReference>
<dbReference type="GeneID" id="2540452"/>
<dbReference type="KEGG" id="spo:2540452"/>
<dbReference type="PomBase" id="SPBC2A9.11c"/>
<dbReference type="VEuPathDB" id="FungiDB:SPBC2A9.11c"/>
<dbReference type="eggNOG" id="KOG1861">
    <property type="taxonomic scope" value="Eukaryota"/>
</dbReference>
<dbReference type="HOGENOM" id="CLU_015513_0_0_1"/>
<dbReference type="InParanoid" id="Q1MTP1"/>
<dbReference type="OMA" id="RETMNFK"/>
<dbReference type="PhylomeDB" id="Q1MTP1"/>
<dbReference type="PRO" id="PR:Q1MTP1"/>
<dbReference type="Proteomes" id="UP000002485">
    <property type="component" value="Chromosome II"/>
</dbReference>
<dbReference type="GO" id="GO:0005829">
    <property type="term" value="C:cytosol"/>
    <property type="evidence" value="ECO:0007005"/>
    <property type="project" value="PomBase"/>
</dbReference>
<dbReference type="GO" id="GO:0005634">
    <property type="term" value="C:nucleus"/>
    <property type="evidence" value="ECO:0007005"/>
    <property type="project" value="PomBase"/>
</dbReference>
<dbReference type="Gene3D" id="1.25.40.990">
    <property type="match status" value="1"/>
</dbReference>
<dbReference type="InterPro" id="IPR000717">
    <property type="entry name" value="PCI_dom"/>
</dbReference>
<dbReference type="InterPro" id="IPR045107">
    <property type="entry name" value="SAC3/GANP/THP3"/>
</dbReference>
<dbReference type="InterPro" id="IPR005062">
    <property type="entry name" value="SAC3/GANP/THP3_conserved"/>
</dbReference>
<dbReference type="PANTHER" id="PTHR12436">
    <property type="entry name" value="80 KDA MCM3-ASSOCIATED PROTEIN"/>
    <property type="match status" value="1"/>
</dbReference>
<dbReference type="PANTHER" id="PTHR12436:SF4">
    <property type="entry name" value="LEUKOCYTE RECEPTOR CLUSTER MEMBER 8"/>
    <property type="match status" value="1"/>
</dbReference>
<dbReference type="Pfam" id="PF03399">
    <property type="entry name" value="SAC3_GANP"/>
    <property type="match status" value="2"/>
</dbReference>
<dbReference type="PROSITE" id="PS50250">
    <property type="entry name" value="PCI"/>
    <property type="match status" value="1"/>
</dbReference>
<sequence length="395" mass="46217">MKKEHHSPWPDSLKEFIGRCIQDAEENSQPELEDEVKLLISRQYEMGNIWNVDWSSMNLESLRKLTNAQNTIIEDKKRKVEKPVSGNQFSLLSEEDEVDKKEKRRRRFENGSRSQNNAKSEELKVNPENGAIIGRSTELEKRYLRLTSAPDPDTVRPLPVLKQTLELLKKKWKEEKNYAYICDQFKSLRQDLTVQRIQNEFSVLVYEIHARIALEKGDVGEYNQCQTQLFHLYSFGIPGNTKEFLAYRILYMLFTKNRSEMNSLLANLKEEDKTNAAVTHALEVRSAMATGDYYKFFHLYLVAPNMGGYLMDLFIERERVQAMIMMCKAYRPSLTMEFLANTLAFEEMEDCVNFFRSCNAVYDSKDPNRILMKESTDRFEKCMKKHAVVDIKGQI</sequence>
<protein>
    <recommendedName>
        <fullName>THP3 homolog C2A9.11c</fullName>
    </recommendedName>
</protein>
<organism>
    <name type="scientific">Schizosaccharomyces pombe (strain 972 / ATCC 24843)</name>
    <name type="common">Fission yeast</name>
    <dbReference type="NCBI Taxonomy" id="284812"/>
    <lineage>
        <taxon>Eukaryota</taxon>
        <taxon>Fungi</taxon>
        <taxon>Dikarya</taxon>
        <taxon>Ascomycota</taxon>
        <taxon>Taphrinomycotina</taxon>
        <taxon>Schizosaccharomycetes</taxon>
        <taxon>Schizosaccharomycetales</taxon>
        <taxon>Schizosaccharomycetaceae</taxon>
        <taxon>Schizosaccharomyces</taxon>
    </lineage>
</organism>
<accession>Q1MTP1</accession>
<comment type="function">
    <text evidence="1">Required for transcription elongation. May also be involved in pre-mRNA splicing (By similarity).</text>
</comment>
<comment type="subcellular location">
    <subcellularLocation>
        <location evidence="4">Cytoplasm</location>
    </subcellularLocation>
    <subcellularLocation>
        <location evidence="4">Nucleus</location>
    </subcellularLocation>
</comment>
<comment type="similarity">
    <text evidence="5">Belongs to the THP3 family.</text>
</comment>
<gene>
    <name type="ORF">SPBC2A9.11c</name>
    <name type="ORF">SPBC2D10.01c</name>
</gene>
<feature type="chain" id="PRO_0000352828" description="THP3 homolog C2A9.11c">
    <location>
        <begin position="1"/>
        <end position="395"/>
    </location>
</feature>
<feature type="domain" description="PCI" evidence="2">
    <location>
        <begin position="218"/>
        <end position="384"/>
    </location>
</feature>
<feature type="region of interest" description="Disordered" evidence="3">
    <location>
        <begin position="91"/>
        <end position="127"/>
    </location>
</feature>